<comment type="subcellular location">
    <subcellularLocation>
        <location evidence="1">Cytoplasm</location>
    </subcellularLocation>
</comment>
<comment type="similarity">
    <text evidence="1">Belongs to the TACO1 family. YeeN subfamily.</text>
</comment>
<evidence type="ECO:0000255" key="1">
    <source>
        <dbReference type="HAMAP-Rule" id="MF_00918"/>
    </source>
</evidence>
<proteinExistence type="inferred from homology"/>
<dbReference type="EMBL" id="AM295250">
    <property type="protein sequence ID" value="CAL27230.1"/>
    <property type="molecule type" value="Genomic_DNA"/>
</dbReference>
<dbReference type="RefSeq" id="WP_015899575.1">
    <property type="nucleotide sequence ID" value="NC_012121.1"/>
</dbReference>
<dbReference type="SMR" id="B9DK71"/>
<dbReference type="KEGG" id="sca:SCA_0317"/>
<dbReference type="eggNOG" id="COG0217">
    <property type="taxonomic scope" value="Bacteria"/>
</dbReference>
<dbReference type="HOGENOM" id="CLU_062974_2_0_9"/>
<dbReference type="OrthoDB" id="9781053at2"/>
<dbReference type="BioCyc" id="SCAR396513:SCA_RS01620-MONOMER"/>
<dbReference type="Proteomes" id="UP000000444">
    <property type="component" value="Chromosome"/>
</dbReference>
<dbReference type="GO" id="GO:0005829">
    <property type="term" value="C:cytosol"/>
    <property type="evidence" value="ECO:0007669"/>
    <property type="project" value="TreeGrafter"/>
</dbReference>
<dbReference type="GO" id="GO:0003677">
    <property type="term" value="F:DNA binding"/>
    <property type="evidence" value="ECO:0007669"/>
    <property type="project" value="UniProtKB-UniRule"/>
</dbReference>
<dbReference type="GO" id="GO:0006355">
    <property type="term" value="P:regulation of DNA-templated transcription"/>
    <property type="evidence" value="ECO:0007669"/>
    <property type="project" value="UniProtKB-UniRule"/>
</dbReference>
<dbReference type="FunFam" id="1.10.10.200:FF:000003">
    <property type="entry name" value="Probable transcriptional regulatory protein YeeN"/>
    <property type="match status" value="1"/>
</dbReference>
<dbReference type="Gene3D" id="1.10.10.200">
    <property type="match status" value="1"/>
</dbReference>
<dbReference type="Gene3D" id="3.30.70.980">
    <property type="match status" value="2"/>
</dbReference>
<dbReference type="HAMAP" id="MF_00693">
    <property type="entry name" value="Transcrip_reg_TACO1"/>
    <property type="match status" value="1"/>
</dbReference>
<dbReference type="HAMAP" id="MF_00918">
    <property type="entry name" value="Transcrip_reg_TACO1_YeeN"/>
    <property type="match status" value="1"/>
</dbReference>
<dbReference type="InterPro" id="IPR017856">
    <property type="entry name" value="Integrase-like_N"/>
</dbReference>
<dbReference type="InterPro" id="IPR048300">
    <property type="entry name" value="TACO1_YebC-like_2nd/3rd_dom"/>
</dbReference>
<dbReference type="InterPro" id="IPR049083">
    <property type="entry name" value="TACO1_YebC_N"/>
</dbReference>
<dbReference type="InterPro" id="IPR002876">
    <property type="entry name" value="Transcrip_reg_TACO1-like"/>
</dbReference>
<dbReference type="InterPro" id="IPR026564">
    <property type="entry name" value="Transcrip_reg_TACO1-like_dom3"/>
</dbReference>
<dbReference type="InterPro" id="IPR026562">
    <property type="entry name" value="Transcrip_reg_TACO1_YeeN"/>
</dbReference>
<dbReference type="InterPro" id="IPR029072">
    <property type="entry name" value="YebC-like"/>
</dbReference>
<dbReference type="NCBIfam" id="NF001030">
    <property type="entry name" value="PRK00110.1"/>
    <property type="match status" value="1"/>
</dbReference>
<dbReference type="NCBIfam" id="NF009044">
    <property type="entry name" value="PRK12378.1"/>
    <property type="match status" value="1"/>
</dbReference>
<dbReference type="NCBIfam" id="TIGR01033">
    <property type="entry name" value="YebC/PmpR family DNA-binding transcriptional regulator"/>
    <property type="match status" value="1"/>
</dbReference>
<dbReference type="PANTHER" id="PTHR12532">
    <property type="entry name" value="TRANSLATIONAL ACTIVATOR OF CYTOCHROME C OXIDASE 1"/>
    <property type="match status" value="1"/>
</dbReference>
<dbReference type="PANTHER" id="PTHR12532:SF0">
    <property type="entry name" value="TRANSLATIONAL ACTIVATOR OF CYTOCHROME C OXIDASE 1"/>
    <property type="match status" value="1"/>
</dbReference>
<dbReference type="Pfam" id="PF20772">
    <property type="entry name" value="TACO1_YebC_N"/>
    <property type="match status" value="1"/>
</dbReference>
<dbReference type="Pfam" id="PF01709">
    <property type="entry name" value="Transcrip_reg"/>
    <property type="match status" value="1"/>
</dbReference>
<dbReference type="SUPFAM" id="SSF75625">
    <property type="entry name" value="YebC-like"/>
    <property type="match status" value="1"/>
</dbReference>
<protein>
    <recommendedName>
        <fullName evidence="1">Probable transcriptional regulatory protein Sca_0317</fullName>
    </recommendedName>
</protein>
<gene>
    <name type="ordered locus">Sca_0317</name>
</gene>
<organism>
    <name type="scientific">Staphylococcus carnosus (strain TM300)</name>
    <dbReference type="NCBI Taxonomy" id="396513"/>
    <lineage>
        <taxon>Bacteria</taxon>
        <taxon>Bacillati</taxon>
        <taxon>Bacillota</taxon>
        <taxon>Bacilli</taxon>
        <taxon>Bacillales</taxon>
        <taxon>Staphylococcaceae</taxon>
        <taxon>Staphylococcus</taxon>
    </lineage>
</organism>
<sequence>MGRKWNNIKEKKAQKDKNTSRIYAKFGKEIYVAAKSGEPDPESNQNLRLVLERAKTYNVPRNIIDRAIDKAKGSDDENYDNLRYEGFGPNGSMLIVDALTNNVNRTASDVRAAFGKNGGNMGVSGSVSYMFDHTATFAFEGKSADEILEVLMEQDLDVRDVVDDGNLTIVYAEPDQFAQVQDALRQDGVEDFQVAEFEMLPQNDIQLSDEDKATLEGLIDALEDLEDVQNVYHNVDLDS</sequence>
<name>Y317_STACT</name>
<accession>B9DK71</accession>
<feature type="chain" id="PRO_1000200109" description="Probable transcriptional regulatory protein Sca_0317">
    <location>
        <begin position="1"/>
        <end position="239"/>
    </location>
</feature>
<reference key="1">
    <citation type="journal article" date="2009" name="Appl. Environ. Microbiol.">
        <title>Genome analysis of the meat starter culture bacterium Staphylococcus carnosus TM300.</title>
        <authorList>
            <person name="Rosenstein R."/>
            <person name="Nerz C."/>
            <person name="Biswas L."/>
            <person name="Resch A."/>
            <person name="Raddatz G."/>
            <person name="Schuster S.C."/>
            <person name="Goetz F."/>
        </authorList>
    </citation>
    <scope>NUCLEOTIDE SEQUENCE [LARGE SCALE GENOMIC DNA]</scope>
    <source>
        <strain>TM300</strain>
    </source>
</reference>
<keyword id="KW-0963">Cytoplasm</keyword>
<keyword id="KW-0238">DNA-binding</keyword>
<keyword id="KW-1185">Reference proteome</keyword>
<keyword id="KW-0804">Transcription</keyword>
<keyword id="KW-0805">Transcription regulation</keyword>